<protein>
    <recommendedName>
        <fullName>Uncharacterized protein YurQ</fullName>
    </recommendedName>
</protein>
<proteinExistence type="predicted"/>
<dbReference type="EMBL" id="AL009126">
    <property type="protein sequence ID" value="CAB15252.1"/>
    <property type="molecule type" value="Genomic_DNA"/>
</dbReference>
<dbReference type="PIR" id="H70018">
    <property type="entry name" value="H70018"/>
</dbReference>
<dbReference type="RefSeq" id="NP_391142.1">
    <property type="nucleotide sequence ID" value="NC_000964.3"/>
</dbReference>
<dbReference type="RefSeq" id="WP_003228617.1">
    <property type="nucleotide sequence ID" value="NZ_OZ025638.1"/>
</dbReference>
<dbReference type="SMR" id="O32158"/>
<dbReference type="FunCoup" id="O32158">
    <property type="interactions" value="49"/>
</dbReference>
<dbReference type="STRING" id="224308.BSU32620"/>
<dbReference type="PaxDb" id="224308-BSU32620"/>
<dbReference type="EnsemblBacteria" id="CAB15252">
    <property type="protein sequence ID" value="CAB15252"/>
    <property type="gene ID" value="BSU_32620"/>
</dbReference>
<dbReference type="GeneID" id="936694"/>
<dbReference type="KEGG" id="bsu:BSU32620"/>
<dbReference type="PATRIC" id="fig|224308.179.peg.3532"/>
<dbReference type="eggNOG" id="COG0322">
    <property type="taxonomic scope" value="Bacteria"/>
</dbReference>
<dbReference type="InParanoid" id="O32158"/>
<dbReference type="OrthoDB" id="2451856at2"/>
<dbReference type="BioCyc" id="BSUB:BSU32620-MONOMER"/>
<dbReference type="Proteomes" id="UP000001570">
    <property type="component" value="Chromosome"/>
</dbReference>
<dbReference type="GO" id="GO:0006289">
    <property type="term" value="P:nucleotide-excision repair"/>
    <property type="evidence" value="ECO:0007669"/>
    <property type="project" value="InterPro"/>
</dbReference>
<dbReference type="CDD" id="cd10434">
    <property type="entry name" value="GIY-YIG_UvrC_Cho"/>
    <property type="match status" value="1"/>
</dbReference>
<dbReference type="FunFam" id="3.40.1440.10:FF:000009">
    <property type="entry name" value="Excinuclease ABC subunit C"/>
    <property type="match status" value="1"/>
</dbReference>
<dbReference type="Gene3D" id="3.40.1440.10">
    <property type="entry name" value="GIY-YIG endonuclease"/>
    <property type="match status" value="1"/>
</dbReference>
<dbReference type="InterPro" id="IPR000305">
    <property type="entry name" value="GIY-YIG_endonuc"/>
</dbReference>
<dbReference type="InterPro" id="IPR035901">
    <property type="entry name" value="GIY-YIG_endonuc_sf"/>
</dbReference>
<dbReference type="InterPro" id="IPR047296">
    <property type="entry name" value="GIY-YIG_UvrC_Cho"/>
</dbReference>
<dbReference type="InterPro" id="IPR014527">
    <property type="entry name" value="UCP026568_excinuclease"/>
</dbReference>
<dbReference type="InterPro" id="IPR050066">
    <property type="entry name" value="UvrABC_protein_C"/>
</dbReference>
<dbReference type="PANTHER" id="PTHR30562:SF1">
    <property type="entry name" value="UVRABC SYSTEM PROTEIN C"/>
    <property type="match status" value="1"/>
</dbReference>
<dbReference type="PANTHER" id="PTHR30562">
    <property type="entry name" value="UVRC/OXIDOREDUCTASE"/>
    <property type="match status" value="1"/>
</dbReference>
<dbReference type="Pfam" id="PF01541">
    <property type="entry name" value="GIY-YIG"/>
    <property type="match status" value="1"/>
</dbReference>
<dbReference type="PIRSF" id="PIRSF026568">
    <property type="entry name" value="UCP026568"/>
    <property type="match status" value="1"/>
</dbReference>
<dbReference type="SMART" id="SM00465">
    <property type="entry name" value="GIYc"/>
    <property type="match status" value="1"/>
</dbReference>
<dbReference type="SUPFAM" id="SSF82771">
    <property type="entry name" value="GIY-YIG endonuclease"/>
    <property type="match status" value="1"/>
</dbReference>
<dbReference type="PROSITE" id="PS50164">
    <property type="entry name" value="GIY_YIG"/>
    <property type="match status" value="1"/>
</dbReference>
<keyword id="KW-1185">Reference proteome</keyword>
<evidence type="ECO:0000255" key="1">
    <source>
        <dbReference type="PROSITE-ProRule" id="PRU00977"/>
    </source>
</evidence>
<gene>
    <name type="primary">yurQ</name>
    <name type="ordered locus">BSU32620</name>
</gene>
<reference key="1">
    <citation type="journal article" date="1997" name="Nature">
        <title>The complete genome sequence of the Gram-positive bacterium Bacillus subtilis.</title>
        <authorList>
            <person name="Kunst F."/>
            <person name="Ogasawara N."/>
            <person name="Moszer I."/>
            <person name="Albertini A.M."/>
            <person name="Alloni G."/>
            <person name="Azevedo V."/>
            <person name="Bertero M.G."/>
            <person name="Bessieres P."/>
            <person name="Bolotin A."/>
            <person name="Borchert S."/>
            <person name="Borriss R."/>
            <person name="Boursier L."/>
            <person name="Brans A."/>
            <person name="Braun M."/>
            <person name="Brignell S.C."/>
            <person name="Bron S."/>
            <person name="Brouillet S."/>
            <person name="Bruschi C.V."/>
            <person name="Caldwell B."/>
            <person name="Capuano V."/>
            <person name="Carter N.M."/>
            <person name="Choi S.-K."/>
            <person name="Codani J.-J."/>
            <person name="Connerton I.F."/>
            <person name="Cummings N.J."/>
            <person name="Daniel R.A."/>
            <person name="Denizot F."/>
            <person name="Devine K.M."/>
            <person name="Duesterhoeft A."/>
            <person name="Ehrlich S.D."/>
            <person name="Emmerson P.T."/>
            <person name="Entian K.-D."/>
            <person name="Errington J."/>
            <person name="Fabret C."/>
            <person name="Ferrari E."/>
            <person name="Foulger D."/>
            <person name="Fritz C."/>
            <person name="Fujita M."/>
            <person name="Fujita Y."/>
            <person name="Fuma S."/>
            <person name="Galizzi A."/>
            <person name="Galleron N."/>
            <person name="Ghim S.-Y."/>
            <person name="Glaser P."/>
            <person name="Goffeau A."/>
            <person name="Golightly E.J."/>
            <person name="Grandi G."/>
            <person name="Guiseppi G."/>
            <person name="Guy B.J."/>
            <person name="Haga K."/>
            <person name="Haiech J."/>
            <person name="Harwood C.R."/>
            <person name="Henaut A."/>
            <person name="Hilbert H."/>
            <person name="Holsappel S."/>
            <person name="Hosono S."/>
            <person name="Hullo M.-F."/>
            <person name="Itaya M."/>
            <person name="Jones L.-M."/>
            <person name="Joris B."/>
            <person name="Karamata D."/>
            <person name="Kasahara Y."/>
            <person name="Klaerr-Blanchard M."/>
            <person name="Klein C."/>
            <person name="Kobayashi Y."/>
            <person name="Koetter P."/>
            <person name="Koningstein G."/>
            <person name="Krogh S."/>
            <person name="Kumano M."/>
            <person name="Kurita K."/>
            <person name="Lapidus A."/>
            <person name="Lardinois S."/>
            <person name="Lauber J."/>
            <person name="Lazarevic V."/>
            <person name="Lee S.-M."/>
            <person name="Levine A."/>
            <person name="Liu H."/>
            <person name="Masuda S."/>
            <person name="Mauel C."/>
            <person name="Medigue C."/>
            <person name="Medina N."/>
            <person name="Mellado R.P."/>
            <person name="Mizuno M."/>
            <person name="Moestl D."/>
            <person name="Nakai S."/>
            <person name="Noback M."/>
            <person name="Noone D."/>
            <person name="O'Reilly M."/>
            <person name="Ogawa K."/>
            <person name="Ogiwara A."/>
            <person name="Oudega B."/>
            <person name="Park S.-H."/>
            <person name="Parro V."/>
            <person name="Pohl T.M."/>
            <person name="Portetelle D."/>
            <person name="Porwollik S."/>
            <person name="Prescott A.M."/>
            <person name="Presecan E."/>
            <person name="Pujic P."/>
            <person name="Purnelle B."/>
            <person name="Rapoport G."/>
            <person name="Rey M."/>
            <person name="Reynolds S."/>
            <person name="Rieger M."/>
            <person name="Rivolta C."/>
            <person name="Rocha E."/>
            <person name="Roche B."/>
            <person name="Rose M."/>
            <person name="Sadaie Y."/>
            <person name="Sato T."/>
            <person name="Scanlan E."/>
            <person name="Schleich S."/>
            <person name="Schroeter R."/>
            <person name="Scoffone F."/>
            <person name="Sekiguchi J."/>
            <person name="Sekowska A."/>
            <person name="Seror S.J."/>
            <person name="Serror P."/>
            <person name="Shin B.-S."/>
            <person name="Soldo B."/>
            <person name="Sorokin A."/>
            <person name="Tacconi E."/>
            <person name="Takagi T."/>
            <person name="Takahashi H."/>
            <person name="Takemaru K."/>
            <person name="Takeuchi M."/>
            <person name="Tamakoshi A."/>
            <person name="Tanaka T."/>
            <person name="Terpstra P."/>
            <person name="Tognoni A."/>
            <person name="Tosato V."/>
            <person name="Uchiyama S."/>
            <person name="Vandenbol M."/>
            <person name="Vannier F."/>
            <person name="Vassarotti A."/>
            <person name="Viari A."/>
            <person name="Wambutt R."/>
            <person name="Wedler E."/>
            <person name="Wedler H."/>
            <person name="Weitzenegger T."/>
            <person name="Winters P."/>
            <person name="Wipat A."/>
            <person name="Yamamoto H."/>
            <person name="Yamane K."/>
            <person name="Yasumoto K."/>
            <person name="Yata K."/>
            <person name="Yoshida K."/>
            <person name="Yoshikawa H.-F."/>
            <person name="Zumstein E."/>
            <person name="Yoshikawa H."/>
            <person name="Danchin A."/>
        </authorList>
    </citation>
    <scope>NUCLEOTIDE SEQUENCE [LARGE SCALE GENOMIC DNA]</scope>
    <source>
        <strain>168</strain>
    </source>
</reference>
<accession>O32158</accession>
<sequence>MIKIDIPAPNVTITERQQSANDNEPKIKPIHGFIDFHQIPRDKGGIFMFYNIHDELLFVGKARKLRQRIKKHFEDTVSPIKHHRDEVYKIEVCVVDDPMEREIYETYIINTQHSKYNIDKVFFK</sequence>
<organism>
    <name type="scientific">Bacillus subtilis (strain 168)</name>
    <dbReference type="NCBI Taxonomy" id="224308"/>
    <lineage>
        <taxon>Bacteria</taxon>
        <taxon>Bacillati</taxon>
        <taxon>Bacillota</taxon>
        <taxon>Bacilli</taxon>
        <taxon>Bacillales</taxon>
        <taxon>Bacillaceae</taxon>
        <taxon>Bacillus</taxon>
    </lineage>
</organism>
<name>YURQ_BACSU</name>
<feature type="chain" id="PRO_0000049921" description="Uncharacterized protein YurQ">
    <location>
        <begin position="1"/>
        <end position="124"/>
    </location>
</feature>
<feature type="domain" description="GIY-YIG" evidence="1">
    <location>
        <begin position="42"/>
        <end position="118"/>
    </location>
</feature>